<evidence type="ECO:0000250" key="1"/>
<evidence type="ECO:0000269" key="2">
    <source>
    </source>
</evidence>
<evidence type="ECO:0000305" key="3"/>
<accession>P9WQ02</accession>
<accession>L0TCY0</accession>
<accession>O06182</accession>
<accession>Q7D6V0</accession>
<comment type="function">
    <text evidence="1">Activates the tRNA-splicing ligase complex by facilitating the enzymatic turnover of catalytic subunit RtcB. Acts by promoting the guanylylation of RtcB, a key intermediate step in tRNA ligation. Can also alter the NTP specificity of RtcB such that ATP, dGTP or ITP is used efficiently (By similarity).</text>
</comment>
<comment type="induction">
    <text evidence="2">A member of the dormancy regulon. Induced in response to reduced oxygen tension (hypoxia) and low levels of nitric oxide (NO).</text>
</comment>
<comment type="similarity">
    <text evidence="3">Belongs to the archease family.</text>
</comment>
<reference key="1">
    <citation type="journal article" date="2002" name="J. Bacteriol.">
        <title>Whole-genome comparison of Mycobacterium tuberculosis clinical and laboratory strains.</title>
        <authorList>
            <person name="Fleischmann R.D."/>
            <person name="Alland D."/>
            <person name="Eisen J.A."/>
            <person name="Carpenter L."/>
            <person name="White O."/>
            <person name="Peterson J.D."/>
            <person name="DeBoy R.T."/>
            <person name="Dodson R.J."/>
            <person name="Gwinn M.L."/>
            <person name="Haft D.H."/>
            <person name="Hickey E.K."/>
            <person name="Kolonay J.F."/>
            <person name="Nelson W.C."/>
            <person name="Umayam L.A."/>
            <person name="Ermolaeva M.D."/>
            <person name="Salzberg S.L."/>
            <person name="Delcher A."/>
            <person name="Utterback T.R."/>
            <person name="Weidman J.F."/>
            <person name="Khouri H.M."/>
            <person name="Gill J."/>
            <person name="Mikula A."/>
            <person name="Bishai W."/>
            <person name="Jacobs W.R. Jr."/>
            <person name="Venter J.C."/>
            <person name="Fraser C.M."/>
        </authorList>
    </citation>
    <scope>NUCLEOTIDE SEQUENCE [LARGE SCALE GENOMIC DNA]</scope>
    <source>
        <strain>CDC 1551 / Oshkosh</strain>
    </source>
</reference>
<reference key="2">
    <citation type="journal article" date="2003" name="J. Exp. Med.">
        <title>Inhibition of respiration by nitric oxide induces a Mycobacterium tuberculosis dormancy program.</title>
        <authorList>
            <person name="Voskuil M.I."/>
            <person name="Schnappinger D."/>
            <person name="Visconti K.C."/>
            <person name="Harrell M.I."/>
            <person name="Dolganov G.M."/>
            <person name="Sherman D.R."/>
            <person name="Schoolnik G.K."/>
        </authorList>
    </citation>
    <scope>INDUCTION BY NITRIC OXIDE (NO) AND BY HYPOXIA</scope>
    <scope>DORMANCY REGULON</scope>
    <source>
        <strain>CDC 1551 / Oshkosh</strain>
    </source>
</reference>
<protein>
    <recommendedName>
        <fullName>Probable protein archease</fullName>
    </recommendedName>
</protein>
<dbReference type="EMBL" id="AE000516">
    <property type="protein sequence ID" value="AAK47021.1"/>
    <property type="molecule type" value="Genomic_DNA"/>
</dbReference>
<dbReference type="PIR" id="E70573">
    <property type="entry name" value="E70573"/>
</dbReference>
<dbReference type="RefSeq" id="WP_003413614.1">
    <property type="nucleotide sequence ID" value="NZ_KK341227.1"/>
</dbReference>
<dbReference type="SMR" id="P9WQ02"/>
<dbReference type="KEGG" id="mtc:MT2705"/>
<dbReference type="PATRIC" id="fig|83331.31.peg.2917"/>
<dbReference type="HOGENOM" id="CLU_111362_2_0_11"/>
<dbReference type="Proteomes" id="UP000001020">
    <property type="component" value="Chromosome"/>
</dbReference>
<dbReference type="GO" id="GO:0046872">
    <property type="term" value="F:metal ion binding"/>
    <property type="evidence" value="ECO:0007669"/>
    <property type="project" value="UniProtKB-KW"/>
</dbReference>
<dbReference type="GO" id="GO:0008033">
    <property type="term" value="P:tRNA processing"/>
    <property type="evidence" value="ECO:0007669"/>
    <property type="project" value="UniProtKB-KW"/>
</dbReference>
<dbReference type="Gene3D" id="3.55.10.10">
    <property type="entry name" value="Archease domain"/>
    <property type="match status" value="1"/>
</dbReference>
<dbReference type="InterPro" id="IPR023572">
    <property type="entry name" value="Archease_dom"/>
</dbReference>
<dbReference type="InterPro" id="IPR036820">
    <property type="entry name" value="Archease_dom_sf"/>
</dbReference>
<dbReference type="Pfam" id="PF01951">
    <property type="entry name" value="Archease"/>
    <property type="match status" value="1"/>
</dbReference>
<dbReference type="SUPFAM" id="SSF69819">
    <property type="entry name" value="MTH1598-like"/>
    <property type="match status" value="1"/>
</dbReference>
<sequence length="179" mass="19566">MLHRDDHINPPRPRGLDVPCARLRATNPLRALARCVQAGKPGTSSGHRSVPHTADLRIEAWAPTRDGCIRQAVLGTVESFLDLESAHAVHTRLRRLTADRDDDLLVAVLEEVIYLLDTVGETPVDLRLRDVDGGVDVTFATTDASTLVQVGAVPKAVSLNELRFSQGRHGWRCAVTLDV</sequence>
<name>ARCH_MYCTO</name>
<proteinExistence type="evidence at transcript level"/>
<feature type="chain" id="PRO_0000426861" description="Probable protein archease">
    <location>
        <begin position="1"/>
        <end position="179"/>
    </location>
</feature>
<feature type="binding site" evidence="1">
    <location>
        <position position="55"/>
    </location>
    <ligand>
        <name>Ca(2+)</name>
        <dbReference type="ChEBI" id="CHEBI:29108"/>
    </ligand>
</feature>
<feature type="binding site" evidence="1">
    <location>
        <position position="178"/>
    </location>
    <ligand>
        <name>Ca(2+)</name>
        <dbReference type="ChEBI" id="CHEBI:29108"/>
    </ligand>
</feature>
<feature type="binding site" evidence="1">
    <location>
        <position position="179"/>
    </location>
    <ligand>
        <name>Ca(2+)</name>
        <dbReference type="ChEBI" id="CHEBI:29108"/>
    </ligand>
</feature>
<keyword id="KW-0106">Calcium</keyword>
<keyword id="KW-0479">Metal-binding</keyword>
<keyword id="KW-1185">Reference proteome</keyword>
<keyword id="KW-0819">tRNA processing</keyword>
<gene>
    <name type="ordered locus">MT2705</name>
</gene>
<organism>
    <name type="scientific">Mycobacterium tuberculosis (strain CDC 1551 / Oshkosh)</name>
    <dbReference type="NCBI Taxonomy" id="83331"/>
    <lineage>
        <taxon>Bacteria</taxon>
        <taxon>Bacillati</taxon>
        <taxon>Actinomycetota</taxon>
        <taxon>Actinomycetes</taxon>
        <taxon>Mycobacteriales</taxon>
        <taxon>Mycobacteriaceae</taxon>
        <taxon>Mycobacterium</taxon>
        <taxon>Mycobacterium tuberculosis complex</taxon>
    </lineage>
</organism>